<feature type="chain" id="PRO_1000021209" description="Recombination-associated protein RdgC">
    <location>
        <begin position="1"/>
        <end position="302"/>
    </location>
</feature>
<organism>
    <name type="scientific">Halorhodospira halophila (strain DSM 244 / SL1)</name>
    <name type="common">Ectothiorhodospira halophila (strain DSM 244 / SL1)</name>
    <dbReference type="NCBI Taxonomy" id="349124"/>
    <lineage>
        <taxon>Bacteria</taxon>
        <taxon>Pseudomonadati</taxon>
        <taxon>Pseudomonadota</taxon>
        <taxon>Gammaproteobacteria</taxon>
        <taxon>Chromatiales</taxon>
        <taxon>Ectothiorhodospiraceae</taxon>
        <taxon>Halorhodospira</taxon>
    </lineage>
</organism>
<reference key="1">
    <citation type="submission" date="2006-12" db="EMBL/GenBank/DDBJ databases">
        <title>Complete sequence of Halorhodospira halophila SL1.</title>
        <authorList>
            <consortium name="US DOE Joint Genome Institute"/>
            <person name="Copeland A."/>
            <person name="Lucas S."/>
            <person name="Lapidus A."/>
            <person name="Barry K."/>
            <person name="Detter J.C."/>
            <person name="Glavina del Rio T."/>
            <person name="Hammon N."/>
            <person name="Israni S."/>
            <person name="Dalin E."/>
            <person name="Tice H."/>
            <person name="Pitluck S."/>
            <person name="Saunders E."/>
            <person name="Brettin T."/>
            <person name="Bruce D."/>
            <person name="Han C."/>
            <person name="Tapia R."/>
            <person name="Schmutz J."/>
            <person name="Larimer F."/>
            <person name="Land M."/>
            <person name="Hauser L."/>
            <person name="Kyrpides N."/>
            <person name="Mikhailova N."/>
            <person name="Hoff W."/>
            <person name="Richardson P."/>
        </authorList>
    </citation>
    <scope>NUCLEOTIDE SEQUENCE [LARGE SCALE GENOMIC DNA]</scope>
    <source>
        <strain>DSM 244 / SL1</strain>
    </source>
</reference>
<gene>
    <name evidence="1" type="primary">rdgC</name>
    <name type="ordered locus">Hhal_2069</name>
</gene>
<protein>
    <recommendedName>
        <fullName evidence="1">Recombination-associated protein RdgC</fullName>
    </recommendedName>
</protein>
<keyword id="KW-0963">Cytoplasm</keyword>
<keyword id="KW-0233">DNA recombination</keyword>
<keyword id="KW-1185">Reference proteome</keyword>
<sequence length="302" mass="34100">MWFRNLIPYRLRDQVAYDPETADQRLAALAFTPCGALEPSRSGFVPPLGPGAPLVHAAAGSLLFCLQEETKLLPAAVIREAMDERIGAVEAAEHRKVRKRERDRIRDEVVTDLMPRAFSRHKRTWGYLDTEAGYLVVDAGSEKQAEHFVEQLREAWGDLTLSPPETEMGPGTIMTRWLAQQQLPGDLELGEEAVLEDPNAEGCEVRVKRQDLTSEEMRAHIDAGKRVRRLAVTYSERLSAVIDTDLSLRRLKFHDVIREQAGDRDPESQAEQLDADFSLMTLELRTLIPRLMEWFGGEKAPS</sequence>
<evidence type="ECO:0000255" key="1">
    <source>
        <dbReference type="HAMAP-Rule" id="MF_00194"/>
    </source>
</evidence>
<proteinExistence type="inferred from homology"/>
<accession>A1WYS1</accession>
<dbReference type="EMBL" id="CP000544">
    <property type="protein sequence ID" value="ABM62833.1"/>
    <property type="molecule type" value="Genomic_DNA"/>
</dbReference>
<dbReference type="RefSeq" id="WP_011814855.1">
    <property type="nucleotide sequence ID" value="NC_008789.1"/>
</dbReference>
<dbReference type="SMR" id="A1WYS1"/>
<dbReference type="STRING" id="349124.Hhal_2069"/>
<dbReference type="KEGG" id="hha:Hhal_2069"/>
<dbReference type="eggNOG" id="COG2974">
    <property type="taxonomic scope" value="Bacteria"/>
</dbReference>
<dbReference type="HOGENOM" id="CLU_052038_1_1_6"/>
<dbReference type="OrthoDB" id="5290530at2"/>
<dbReference type="Proteomes" id="UP000000647">
    <property type="component" value="Chromosome"/>
</dbReference>
<dbReference type="GO" id="GO:0043590">
    <property type="term" value="C:bacterial nucleoid"/>
    <property type="evidence" value="ECO:0007669"/>
    <property type="project" value="TreeGrafter"/>
</dbReference>
<dbReference type="GO" id="GO:0005737">
    <property type="term" value="C:cytoplasm"/>
    <property type="evidence" value="ECO:0007669"/>
    <property type="project" value="UniProtKB-UniRule"/>
</dbReference>
<dbReference type="GO" id="GO:0003690">
    <property type="term" value="F:double-stranded DNA binding"/>
    <property type="evidence" value="ECO:0007669"/>
    <property type="project" value="TreeGrafter"/>
</dbReference>
<dbReference type="GO" id="GO:0006310">
    <property type="term" value="P:DNA recombination"/>
    <property type="evidence" value="ECO:0007669"/>
    <property type="project" value="UniProtKB-UniRule"/>
</dbReference>
<dbReference type="GO" id="GO:0000018">
    <property type="term" value="P:regulation of DNA recombination"/>
    <property type="evidence" value="ECO:0007669"/>
    <property type="project" value="TreeGrafter"/>
</dbReference>
<dbReference type="HAMAP" id="MF_00194">
    <property type="entry name" value="RdgC"/>
    <property type="match status" value="1"/>
</dbReference>
<dbReference type="InterPro" id="IPR007476">
    <property type="entry name" value="RdgC"/>
</dbReference>
<dbReference type="NCBIfam" id="NF001464">
    <property type="entry name" value="PRK00321.1-5"/>
    <property type="match status" value="1"/>
</dbReference>
<dbReference type="PANTHER" id="PTHR38103">
    <property type="entry name" value="RECOMBINATION-ASSOCIATED PROTEIN RDGC"/>
    <property type="match status" value="1"/>
</dbReference>
<dbReference type="PANTHER" id="PTHR38103:SF1">
    <property type="entry name" value="RECOMBINATION-ASSOCIATED PROTEIN RDGC"/>
    <property type="match status" value="1"/>
</dbReference>
<dbReference type="Pfam" id="PF04381">
    <property type="entry name" value="RdgC"/>
    <property type="match status" value="1"/>
</dbReference>
<comment type="function">
    <text evidence="1">May be involved in recombination.</text>
</comment>
<comment type="subcellular location">
    <subcellularLocation>
        <location evidence="1">Cytoplasm</location>
        <location evidence="1">Nucleoid</location>
    </subcellularLocation>
</comment>
<comment type="similarity">
    <text evidence="1">Belongs to the RdgC family.</text>
</comment>
<name>RDGC_HALHL</name>